<protein>
    <recommendedName>
        <fullName evidence="1">Cytochrome c-type biogenesis protein CcmE</fullName>
    </recommendedName>
    <alternativeName>
        <fullName evidence="1">Cytochrome c maturation protein E</fullName>
    </alternativeName>
    <alternativeName>
        <fullName evidence="1">Heme chaperone CcmE</fullName>
    </alternativeName>
</protein>
<dbReference type="EMBL" id="CP000529">
    <property type="protein sequence ID" value="ABM35906.1"/>
    <property type="molecule type" value="Genomic_DNA"/>
</dbReference>
<dbReference type="RefSeq" id="WP_011800006.1">
    <property type="nucleotide sequence ID" value="NC_008781.1"/>
</dbReference>
<dbReference type="SMR" id="A1VJS8"/>
<dbReference type="STRING" id="365044.Pnap_0586"/>
<dbReference type="KEGG" id="pna:Pnap_0586"/>
<dbReference type="eggNOG" id="COG2332">
    <property type="taxonomic scope" value="Bacteria"/>
</dbReference>
<dbReference type="HOGENOM" id="CLU_079503_1_1_4"/>
<dbReference type="OrthoDB" id="9793584at2"/>
<dbReference type="Proteomes" id="UP000000644">
    <property type="component" value="Chromosome"/>
</dbReference>
<dbReference type="GO" id="GO:0005886">
    <property type="term" value="C:plasma membrane"/>
    <property type="evidence" value="ECO:0007669"/>
    <property type="project" value="UniProtKB-SubCell"/>
</dbReference>
<dbReference type="GO" id="GO:0020037">
    <property type="term" value="F:heme binding"/>
    <property type="evidence" value="ECO:0007669"/>
    <property type="project" value="InterPro"/>
</dbReference>
<dbReference type="GO" id="GO:0046872">
    <property type="term" value="F:metal ion binding"/>
    <property type="evidence" value="ECO:0007669"/>
    <property type="project" value="UniProtKB-KW"/>
</dbReference>
<dbReference type="GO" id="GO:0017004">
    <property type="term" value="P:cytochrome complex assembly"/>
    <property type="evidence" value="ECO:0007669"/>
    <property type="project" value="UniProtKB-KW"/>
</dbReference>
<dbReference type="FunFam" id="2.40.50.140:FF:000104">
    <property type="entry name" value="Cytochrome c-type biogenesis protein CcmE"/>
    <property type="match status" value="1"/>
</dbReference>
<dbReference type="Gene3D" id="2.40.50.140">
    <property type="entry name" value="Nucleic acid-binding proteins"/>
    <property type="match status" value="1"/>
</dbReference>
<dbReference type="HAMAP" id="MF_01959">
    <property type="entry name" value="CcmE"/>
    <property type="match status" value="1"/>
</dbReference>
<dbReference type="InterPro" id="IPR004329">
    <property type="entry name" value="CcmE"/>
</dbReference>
<dbReference type="InterPro" id="IPR036127">
    <property type="entry name" value="CcmE-like_sf"/>
</dbReference>
<dbReference type="InterPro" id="IPR012340">
    <property type="entry name" value="NA-bd_OB-fold"/>
</dbReference>
<dbReference type="NCBIfam" id="NF009727">
    <property type="entry name" value="PRK13254.1-1"/>
    <property type="match status" value="1"/>
</dbReference>
<dbReference type="NCBIfam" id="NF009729">
    <property type="entry name" value="PRK13254.1-3"/>
    <property type="match status" value="1"/>
</dbReference>
<dbReference type="NCBIfam" id="NF009731">
    <property type="entry name" value="PRK13254.1-5"/>
    <property type="match status" value="1"/>
</dbReference>
<dbReference type="PANTHER" id="PTHR34128">
    <property type="entry name" value="CYTOCHROME C-TYPE BIOGENESIS PROTEIN CCME HOMOLOG, MITOCHONDRIAL"/>
    <property type="match status" value="1"/>
</dbReference>
<dbReference type="PANTHER" id="PTHR34128:SF2">
    <property type="entry name" value="CYTOCHROME C-TYPE BIOGENESIS PROTEIN CCME HOMOLOG, MITOCHONDRIAL"/>
    <property type="match status" value="1"/>
</dbReference>
<dbReference type="Pfam" id="PF03100">
    <property type="entry name" value="CcmE"/>
    <property type="match status" value="1"/>
</dbReference>
<dbReference type="SUPFAM" id="SSF82093">
    <property type="entry name" value="Heme chaperone CcmE"/>
    <property type="match status" value="1"/>
</dbReference>
<sequence length="149" mass="15782">MKARHKRLGLIVAGLAALGLGAALVLSAFQKNLVFFFTPSQVAAGEAPRNRSFRVGGMVEVGSIERQADGVTVSFLVTDTAQRLRVNYRGSLPDLFKEGKGVVAQGKLTADQLFVADEVLAKHDENYMPPEAAYALKQAGAPALAGALK</sequence>
<proteinExistence type="inferred from homology"/>
<organism>
    <name type="scientific">Polaromonas naphthalenivorans (strain CJ2)</name>
    <dbReference type="NCBI Taxonomy" id="365044"/>
    <lineage>
        <taxon>Bacteria</taxon>
        <taxon>Pseudomonadati</taxon>
        <taxon>Pseudomonadota</taxon>
        <taxon>Betaproteobacteria</taxon>
        <taxon>Burkholderiales</taxon>
        <taxon>Comamonadaceae</taxon>
        <taxon>Polaromonas</taxon>
    </lineage>
</organism>
<keyword id="KW-0997">Cell inner membrane</keyword>
<keyword id="KW-1003">Cell membrane</keyword>
<keyword id="KW-0201">Cytochrome c-type biogenesis</keyword>
<keyword id="KW-0349">Heme</keyword>
<keyword id="KW-0408">Iron</keyword>
<keyword id="KW-0472">Membrane</keyword>
<keyword id="KW-0479">Metal-binding</keyword>
<keyword id="KW-1185">Reference proteome</keyword>
<keyword id="KW-0735">Signal-anchor</keyword>
<keyword id="KW-0812">Transmembrane</keyword>
<keyword id="KW-1133">Transmembrane helix</keyword>
<gene>
    <name evidence="1" type="primary">ccmE</name>
    <name evidence="1" type="synonym">cycJ</name>
    <name type="ordered locus">Pnap_0586</name>
</gene>
<comment type="function">
    <text evidence="1">Heme chaperone required for the biogenesis of c-type cytochromes. Transiently binds heme delivered by CcmC and transfers the heme to apo-cytochromes in a process facilitated by CcmF and CcmH.</text>
</comment>
<comment type="subcellular location">
    <subcellularLocation>
        <location evidence="1">Cell inner membrane</location>
        <topology evidence="1">Single-pass type II membrane protein</topology>
        <orientation evidence="1">Periplasmic side</orientation>
    </subcellularLocation>
</comment>
<comment type="similarity">
    <text evidence="1">Belongs to the CcmE/CycJ family.</text>
</comment>
<evidence type="ECO:0000255" key="1">
    <source>
        <dbReference type="HAMAP-Rule" id="MF_01959"/>
    </source>
</evidence>
<accession>A1VJS8</accession>
<name>CCME_POLNA</name>
<reference key="1">
    <citation type="journal article" date="2009" name="Environ. Microbiol.">
        <title>The genome of Polaromonas naphthalenivorans strain CJ2, isolated from coal tar-contaminated sediment, reveals physiological and metabolic versatility and evolution through extensive horizontal gene transfer.</title>
        <authorList>
            <person name="Yagi J.M."/>
            <person name="Sims D."/>
            <person name="Brettin T."/>
            <person name="Bruce D."/>
            <person name="Madsen E.L."/>
        </authorList>
    </citation>
    <scope>NUCLEOTIDE SEQUENCE [LARGE SCALE GENOMIC DNA]</scope>
    <source>
        <strain>CJ2</strain>
    </source>
</reference>
<feature type="chain" id="PRO_1000070828" description="Cytochrome c-type biogenesis protein CcmE">
    <location>
        <begin position="1"/>
        <end position="149"/>
    </location>
</feature>
<feature type="topological domain" description="Cytoplasmic" evidence="1">
    <location>
        <begin position="1"/>
        <end position="7"/>
    </location>
</feature>
<feature type="transmembrane region" description="Helical; Signal-anchor for type II membrane protein" evidence="1">
    <location>
        <begin position="8"/>
        <end position="28"/>
    </location>
</feature>
<feature type="topological domain" description="Periplasmic" evidence="1">
    <location>
        <begin position="29"/>
        <end position="149"/>
    </location>
</feature>
<feature type="binding site" description="covalent" evidence="1">
    <location>
        <position position="123"/>
    </location>
    <ligand>
        <name>heme</name>
        <dbReference type="ChEBI" id="CHEBI:30413"/>
    </ligand>
</feature>
<feature type="binding site" description="axial binding residue" evidence="1">
    <location>
        <position position="127"/>
    </location>
    <ligand>
        <name>heme</name>
        <dbReference type="ChEBI" id="CHEBI:30413"/>
    </ligand>
    <ligandPart>
        <name>Fe</name>
        <dbReference type="ChEBI" id="CHEBI:18248"/>
    </ligandPart>
</feature>